<proteinExistence type="evidence at protein level"/>
<reference key="1">
    <citation type="submission" date="2001-12" db="EMBL/GenBank/DDBJ databases">
        <title>HCA557a, a transcription factor associated with hepatocellular carcinoma.</title>
        <authorList>
            <person name="Dong X.-Y."/>
            <person name="Chen W.-F."/>
        </authorList>
    </citation>
    <scope>NUCLEOTIDE SEQUENCE [MRNA] (ISOFORM 1)</scope>
</reference>
<reference key="2">
    <citation type="journal article" date="2004" name="Nat. Genet.">
        <title>Complete sequencing and characterization of 21,243 full-length human cDNAs.</title>
        <authorList>
            <person name="Ota T."/>
            <person name="Suzuki Y."/>
            <person name="Nishikawa T."/>
            <person name="Otsuki T."/>
            <person name="Sugiyama T."/>
            <person name="Irie R."/>
            <person name="Wakamatsu A."/>
            <person name="Hayashi K."/>
            <person name="Sato H."/>
            <person name="Nagai K."/>
            <person name="Kimura K."/>
            <person name="Makita H."/>
            <person name="Sekine M."/>
            <person name="Obayashi M."/>
            <person name="Nishi T."/>
            <person name="Shibahara T."/>
            <person name="Tanaka T."/>
            <person name="Ishii S."/>
            <person name="Yamamoto J."/>
            <person name="Saito K."/>
            <person name="Kawai Y."/>
            <person name="Isono Y."/>
            <person name="Nakamura Y."/>
            <person name="Nagahari K."/>
            <person name="Murakami K."/>
            <person name="Yasuda T."/>
            <person name="Iwayanagi T."/>
            <person name="Wagatsuma M."/>
            <person name="Shiratori A."/>
            <person name="Sudo H."/>
            <person name="Hosoiri T."/>
            <person name="Kaku Y."/>
            <person name="Kodaira H."/>
            <person name="Kondo H."/>
            <person name="Sugawara M."/>
            <person name="Takahashi M."/>
            <person name="Kanda K."/>
            <person name="Yokoi T."/>
            <person name="Furuya T."/>
            <person name="Kikkawa E."/>
            <person name="Omura Y."/>
            <person name="Abe K."/>
            <person name="Kamihara K."/>
            <person name="Katsuta N."/>
            <person name="Sato K."/>
            <person name="Tanikawa M."/>
            <person name="Yamazaki M."/>
            <person name="Ninomiya K."/>
            <person name="Ishibashi T."/>
            <person name="Yamashita H."/>
            <person name="Murakawa K."/>
            <person name="Fujimori K."/>
            <person name="Tanai H."/>
            <person name="Kimata M."/>
            <person name="Watanabe M."/>
            <person name="Hiraoka S."/>
            <person name="Chiba Y."/>
            <person name="Ishida S."/>
            <person name="Ono Y."/>
            <person name="Takiguchi S."/>
            <person name="Watanabe S."/>
            <person name="Yosida M."/>
            <person name="Hotuta T."/>
            <person name="Kusano J."/>
            <person name="Kanehori K."/>
            <person name="Takahashi-Fujii A."/>
            <person name="Hara H."/>
            <person name="Tanase T.-O."/>
            <person name="Nomura Y."/>
            <person name="Togiya S."/>
            <person name="Komai F."/>
            <person name="Hara R."/>
            <person name="Takeuchi K."/>
            <person name="Arita M."/>
            <person name="Imose N."/>
            <person name="Musashino K."/>
            <person name="Yuuki H."/>
            <person name="Oshima A."/>
            <person name="Sasaki N."/>
            <person name="Aotsuka S."/>
            <person name="Yoshikawa Y."/>
            <person name="Matsunawa H."/>
            <person name="Ichihara T."/>
            <person name="Shiohata N."/>
            <person name="Sano S."/>
            <person name="Moriya S."/>
            <person name="Momiyama H."/>
            <person name="Satoh N."/>
            <person name="Takami S."/>
            <person name="Terashima Y."/>
            <person name="Suzuki O."/>
            <person name="Nakagawa S."/>
            <person name="Senoh A."/>
            <person name="Mizoguchi H."/>
            <person name="Goto Y."/>
            <person name="Shimizu F."/>
            <person name="Wakebe H."/>
            <person name="Hishigaki H."/>
            <person name="Watanabe T."/>
            <person name="Sugiyama A."/>
            <person name="Takemoto M."/>
            <person name="Kawakami B."/>
            <person name="Yamazaki M."/>
            <person name="Watanabe K."/>
            <person name="Kumagai A."/>
            <person name="Itakura S."/>
            <person name="Fukuzumi Y."/>
            <person name="Fujimori Y."/>
            <person name="Komiyama M."/>
            <person name="Tashiro H."/>
            <person name="Tanigami A."/>
            <person name="Fujiwara T."/>
            <person name="Ono T."/>
            <person name="Yamada K."/>
            <person name="Fujii Y."/>
            <person name="Ozaki K."/>
            <person name="Hirao M."/>
            <person name="Ohmori Y."/>
            <person name="Kawabata A."/>
            <person name="Hikiji T."/>
            <person name="Kobatake N."/>
            <person name="Inagaki H."/>
            <person name="Ikema Y."/>
            <person name="Okamoto S."/>
            <person name="Okitani R."/>
            <person name="Kawakami T."/>
            <person name="Noguchi S."/>
            <person name="Itoh T."/>
            <person name="Shigeta K."/>
            <person name="Senba T."/>
            <person name="Matsumura K."/>
            <person name="Nakajima Y."/>
            <person name="Mizuno T."/>
            <person name="Morinaga M."/>
            <person name="Sasaki M."/>
            <person name="Togashi T."/>
            <person name="Oyama M."/>
            <person name="Hata H."/>
            <person name="Watanabe M."/>
            <person name="Komatsu T."/>
            <person name="Mizushima-Sugano J."/>
            <person name="Satoh T."/>
            <person name="Shirai Y."/>
            <person name="Takahashi Y."/>
            <person name="Nakagawa K."/>
            <person name="Okumura K."/>
            <person name="Nagase T."/>
            <person name="Nomura N."/>
            <person name="Kikuchi H."/>
            <person name="Masuho Y."/>
            <person name="Yamashita R."/>
            <person name="Nakai K."/>
            <person name="Yada T."/>
            <person name="Nakamura Y."/>
            <person name="Ohara O."/>
            <person name="Isogai T."/>
            <person name="Sugano S."/>
        </authorList>
    </citation>
    <scope>NUCLEOTIDE SEQUENCE [LARGE SCALE MRNA] (ISOFORM 3)</scope>
    <source>
        <tissue>Colon</tissue>
    </source>
</reference>
<reference key="3">
    <citation type="journal article" date="2007" name="BMC Genomics">
        <title>The full-ORF clone resource of the German cDNA consortium.</title>
        <authorList>
            <person name="Bechtel S."/>
            <person name="Rosenfelder H."/>
            <person name="Duda A."/>
            <person name="Schmidt C.P."/>
            <person name="Ernst U."/>
            <person name="Wellenreuther R."/>
            <person name="Mehrle A."/>
            <person name="Schuster C."/>
            <person name="Bahr A."/>
            <person name="Bloecker H."/>
            <person name="Heubner D."/>
            <person name="Hoerlein A."/>
            <person name="Michel G."/>
            <person name="Wedler H."/>
            <person name="Koehrer K."/>
            <person name="Ottenwaelder B."/>
            <person name="Poustka A."/>
            <person name="Wiemann S."/>
            <person name="Schupp I."/>
        </authorList>
    </citation>
    <scope>NUCLEOTIDE SEQUENCE [LARGE SCALE MRNA] (ISOFORM 2)</scope>
    <source>
        <tissue>Uterus</tissue>
    </source>
</reference>
<reference key="4">
    <citation type="journal article" date="2004" name="Genome Res.">
        <title>The status, quality, and expansion of the NIH full-length cDNA project: the Mammalian Gene Collection (MGC).</title>
        <authorList>
            <consortium name="The MGC Project Team"/>
        </authorList>
    </citation>
    <scope>NUCLEOTIDE SEQUENCE [LARGE SCALE MRNA] (ISOFORM 1)</scope>
    <source>
        <tissue>Lung</tissue>
    </source>
</reference>
<reference key="5">
    <citation type="journal article" date="2013" name="PLoS Genet.">
        <title>A newly uncovered group of distantly related lysine methyltransferases preferentially interact with molecular chaperones to regulate their activity.</title>
        <authorList>
            <person name="Cloutier P."/>
            <person name="Lavallee-Adam M."/>
            <person name="Faubert D."/>
            <person name="Blanchette M."/>
            <person name="Coulombe B."/>
        </authorList>
    </citation>
    <scope>INTERACTION WITH HSP70 FAMILY MEMBERS; TCP-1 CHAPERONIN FAMILY MEMBERS; HSPD1; STIP1 AND TUBULIN</scope>
    <scope>SUBCELLULAR LOCATION</scope>
</reference>
<reference key="6">
    <citation type="journal article" date="2017" name="Nucleic Acids Res.">
        <title>The novel lysine specific methyltransferase METTL21B affects mRNA translation through inducible and dynamic methylation of Lys-165 in human eukaryotic elongation factor 1 alpha (eEF1A).</title>
        <authorList>
            <person name="Malecki J."/>
            <person name="Aileni V.K."/>
            <person name="Ho A.Y."/>
            <person name="Schwarz J."/>
            <person name="Moen A."/>
            <person name="Soerensen V."/>
            <person name="Nilges B.S."/>
            <person name="Jakobsson M.E."/>
            <person name="Leidel S.A."/>
            <person name="Falnes P.O."/>
        </authorList>
    </citation>
    <scope>FUNCTION</scope>
    <scope>SUBCELLULAR LOCATION</scope>
    <scope>CATALYTIC ACTIVITY</scope>
</reference>
<reference key="7">
    <citation type="journal article" date="2017" name="Mol. Cell. Proteomics">
        <title>METTL21B Is a Novel Human Lysine Methyltransferase of Translation Elongation Factor 1A: Discovery by CRISPR/Cas9 Knockout.</title>
        <authorList>
            <person name="Hamey J.J."/>
            <person name="Wienert B."/>
            <person name="Quinlan K.G.R."/>
            <person name="Wilkins M.R."/>
        </authorList>
    </citation>
    <scope>FUNCTION</scope>
    <scope>CATALYTIC ACTIVITY</scope>
</reference>
<reference key="8">
    <citation type="submission" date="2014-06" db="PDB data bank">
        <title>Crystal structure of human methyltransferase-like protein 21B.</title>
        <authorList>
            <consortium name="Structural genomics consortium (SGC)"/>
        </authorList>
    </citation>
    <scope>X-RAY CRYSTALLOGRAPHY (1.25 ANGSTROMS) IN COMPLEX WITH S-ADENOSYL-L-HOMOCYSTEINE</scope>
</reference>
<sequence>MADPGPDPESESESVFPREVGLFADSYSEKSQFCFCGHVLTITQNFGSRLGVAARVWDAALSLCNYFESQNVDFRGKKVIELGAGTGIVGILAALQGGDVTITDLPLALEQIQGNVQANVPAGGQAQVRALSWGIDHHVFPANYDLVLGADIVYLEPTFPLLLGTLQHLCRPHGTIYLASKMRKEHGTESFFQHLLPQHFQLELAQRDEDENVNIYRARHREPRPA</sequence>
<keyword id="KW-0002">3D-structure</keyword>
<keyword id="KW-0025">Alternative splicing</keyword>
<keyword id="KW-0963">Cytoplasm</keyword>
<keyword id="KW-0206">Cytoskeleton</keyword>
<keyword id="KW-0489">Methyltransferase</keyword>
<keyword id="KW-1267">Proteomics identification</keyword>
<keyword id="KW-1185">Reference proteome</keyword>
<keyword id="KW-0949">S-adenosyl-L-methionine</keyword>
<keyword id="KW-0808">Transferase</keyword>
<protein>
    <recommendedName>
        <fullName evidence="12">EEF1A lysine methyltransferase 3</fullName>
        <ecNumber evidence="2 3">2.1.1.-</ecNumber>
    </recommendedName>
    <alternativeName>
        <fullName>Hepatocellular carcinoma-associated antigen 557a</fullName>
    </alternativeName>
    <alternativeName>
        <fullName>Methyltransferase-like protein 21B</fullName>
    </alternativeName>
    <alternativeName>
        <fullName>Protein-lysine methyltransferase METTL21B</fullName>
    </alternativeName>
    <alternativeName>
        <fullName evidence="7 8">eEF1A-KMT3</fullName>
    </alternativeName>
</protein>
<gene>
    <name evidence="12" type="primary">EEF1AKMT3</name>
    <name type="synonym">FAM119B</name>
    <name evidence="9" type="synonym">HCA557A</name>
    <name evidence="7" type="synonym">METTL21B</name>
</gene>
<name>EFMT3_HUMAN</name>
<dbReference type="EC" id="2.1.1.-" evidence="2 3"/>
<dbReference type="EMBL" id="AF455816">
    <property type="protein sequence ID" value="AAL66294.1"/>
    <property type="molecule type" value="mRNA"/>
</dbReference>
<dbReference type="EMBL" id="AK024983">
    <property type="protein sequence ID" value="BAB15049.1"/>
    <property type="molecule type" value="mRNA"/>
</dbReference>
<dbReference type="EMBL" id="AL050100">
    <property type="protein sequence ID" value="CAB43271.2"/>
    <property type="molecule type" value="mRNA"/>
</dbReference>
<dbReference type="EMBL" id="BC016395">
    <property type="protein sequence ID" value="AAH16395.1"/>
    <property type="molecule type" value="mRNA"/>
</dbReference>
<dbReference type="EMBL" id="BC099841">
    <property type="protein sequence ID" value="AAH99841.1"/>
    <property type="molecule type" value="mRNA"/>
</dbReference>
<dbReference type="EMBL" id="BC103501">
    <property type="protein sequence ID" value="AAI03502.1"/>
    <property type="molecule type" value="mRNA"/>
</dbReference>
<dbReference type="CCDS" id="CCDS31848.1">
    <molecule id="Q96AZ1-2"/>
</dbReference>
<dbReference type="CCDS" id="CCDS8957.1">
    <molecule id="Q96AZ1-1"/>
</dbReference>
<dbReference type="PIR" id="T08749">
    <property type="entry name" value="T08749"/>
</dbReference>
<dbReference type="RefSeq" id="NP_056248.2">
    <molecule id="Q96AZ1-1"/>
    <property type="nucleotide sequence ID" value="NM_015433.2"/>
</dbReference>
<dbReference type="RefSeq" id="NP_996797.1">
    <molecule id="Q96AZ1-2"/>
    <property type="nucleotide sequence ID" value="NM_206914.2"/>
</dbReference>
<dbReference type="PDB" id="4QPN">
    <property type="method" value="X-ray"/>
    <property type="resolution" value="1.25 A"/>
    <property type="chains" value="A=1-226"/>
</dbReference>
<dbReference type="PDBsum" id="4QPN"/>
<dbReference type="SMR" id="Q96AZ1"/>
<dbReference type="BioGRID" id="117403">
    <property type="interactions" value="409"/>
</dbReference>
<dbReference type="FunCoup" id="Q96AZ1">
    <property type="interactions" value="246"/>
</dbReference>
<dbReference type="IntAct" id="Q96AZ1">
    <property type="interactions" value="304"/>
</dbReference>
<dbReference type="STRING" id="9606.ENSP00000300209"/>
<dbReference type="iPTMnet" id="Q96AZ1"/>
<dbReference type="PhosphoSitePlus" id="Q96AZ1"/>
<dbReference type="BioMuta" id="EEF1AKMT3"/>
<dbReference type="DMDM" id="74731178"/>
<dbReference type="MassIVE" id="Q96AZ1"/>
<dbReference type="PaxDb" id="9606-ENSP00000300209"/>
<dbReference type="PeptideAtlas" id="Q96AZ1"/>
<dbReference type="Antibodypedia" id="28949">
    <property type="antibodies" value="16 antibodies from 8 providers"/>
</dbReference>
<dbReference type="DNASU" id="25895"/>
<dbReference type="Ensembl" id="ENST00000300209.13">
    <molecule id="Q96AZ1-1"/>
    <property type="protein sequence ID" value="ENSP00000300209.8"/>
    <property type="gene ID" value="ENSG00000123427.17"/>
</dbReference>
<dbReference type="Ensembl" id="ENST00000333012.5">
    <molecule id="Q96AZ1-2"/>
    <property type="protein sequence ID" value="ENSP00000327425.5"/>
    <property type="gene ID" value="ENSG00000123427.17"/>
</dbReference>
<dbReference type="GeneID" id="25895"/>
<dbReference type="KEGG" id="hsa:25895"/>
<dbReference type="MANE-Select" id="ENST00000300209.13">
    <property type="protein sequence ID" value="ENSP00000300209.8"/>
    <property type="RefSeq nucleotide sequence ID" value="NM_015433.3"/>
    <property type="RefSeq protein sequence ID" value="NP_056248.2"/>
</dbReference>
<dbReference type="UCSC" id="uc001sqf.4">
    <molecule id="Q96AZ1-1"/>
    <property type="organism name" value="human"/>
</dbReference>
<dbReference type="AGR" id="HGNC:24936"/>
<dbReference type="CTD" id="25895"/>
<dbReference type="DisGeNET" id="25895"/>
<dbReference type="GeneCards" id="EEF1AKMT3"/>
<dbReference type="HGNC" id="HGNC:24936">
    <property type="gene designation" value="EEF1AKMT3"/>
</dbReference>
<dbReference type="HPA" id="ENSG00000123427">
    <property type="expression patterns" value="Low tissue specificity"/>
</dbReference>
<dbReference type="MIM" id="615258">
    <property type="type" value="gene"/>
</dbReference>
<dbReference type="neXtProt" id="NX_Q96AZ1"/>
<dbReference type="OpenTargets" id="ENSG00000123427"/>
<dbReference type="PharmGKB" id="PA145008445"/>
<dbReference type="VEuPathDB" id="HostDB:ENSG00000123427"/>
<dbReference type="eggNOG" id="KOG2793">
    <property type="taxonomic scope" value="Eukaryota"/>
</dbReference>
<dbReference type="GeneTree" id="ENSGT00940000161297"/>
<dbReference type="HOGENOM" id="CLU_055721_4_0_1"/>
<dbReference type="InParanoid" id="Q96AZ1"/>
<dbReference type="OMA" id="HRDDKQN"/>
<dbReference type="OrthoDB" id="413520at2759"/>
<dbReference type="PAN-GO" id="Q96AZ1">
    <property type="GO annotations" value="4 GO annotations based on evolutionary models"/>
</dbReference>
<dbReference type="PhylomeDB" id="Q96AZ1"/>
<dbReference type="TreeFam" id="TF313206"/>
<dbReference type="PathwayCommons" id="Q96AZ1"/>
<dbReference type="SignaLink" id="Q96AZ1"/>
<dbReference type="BioGRID-ORCS" id="25895">
    <property type="hits" value="28 hits in 1155 CRISPR screens"/>
</dbReference>
<dbReference type="EvolutionaryTrace" id="Q96AZ1"/>
<dbReference type="GenomeRNAi" id="25895"/>
<dbReference type="Pharos" id="Q96AZ1">
    <property type="development level" value="Tdark"/>
</dbReference>
<dbReference type="PRO" id="PR:Q96AZ1"/>
<dbReference type="Proteomes" id="UP000005640">
    <property type="component" value="Chromosome 12"/>
</dbReference>
<dbReference type="RNAct" id="Q96AZ1">
    <property type="molecule type" value="protein"/>
</dbReference>
<dbReference type="Bgee" id="ENSG00000123427">
    <property type="expression patterns" value="Expressed in body of pancreas and 151 other cell types or tissues"/>
</dbReference>
<dbReference type="ExpressionAtlas" id="Q96AZ1">
    <property type="expression patterns" value="baseline and differential"/>
</dbReference>
<dbReference type="GO" id="GO:0005813">
    <property type="term" value="C:centrosome"/>
    <property type="evidence" value="ECO:0000314"/>
    <property type="project" value="HPA"/>
</dbReference>
<dbReference type="GO" id="GO:0005694">
    <property type="term" value="C:chromosome"/>
    <property type="evidence" value="ECO:0000314"/>
    <property type="project" value="HPA"/>
</dbReference>
<dbReference type="GO" id="GO:0005737">
    <property type="term" value="C:cytoplasm"/>
    <property type="evidence" value="ECO:0000314"/>
    <property type="project" value="UniProtKB"/>
</dbReference>
<dbReference type="GO" id="GO:0005829">
    <property type="term" value="C:cytosol"/>
    <property type="evidence" value="ECO:0000318"/>
    <property type="project" value="GO_Central"/>
</dbReference>
<dbReference type="GO" id="GO:0005654">
    <property type="term" value="C:nucleoplasm"/>
    <property type="evidence" value="ECO:0000314"/>
    <property type="project" value="HPA"/>
</dbReference>
<dbReference type="GO" id="GO:0032991">
    <property type="term" value="C:protein-containing complex"/>
    <property type="evidence" value="ECO:0000314"/>
    <property type="project" value="UniProtKB"/>
</dbReference>
<dbReference type="GO" id="GO:0031072">
    <property type="term" value="F:heat shock protein binding"/>
    <property type="evidence" value="ECO:0000353"/>
    <property type="project" value="UniProtKB"/>
</dbReference>
<dbReference type="GO" id="GO:0008168">
    <property type="term" value="F:methyltransferase activity"/>
    <property type="evidence" value="ECO:0000314"/>
    <property type="project" value="UniProtKB"/>
</dbReference>
<dbReference type="GO" id="GO:0016279">
    <property type="term" value="F:protein-lysine N-methyltransferase activity"/>
    <property type="evidence" value="ECO:0000314"/>
    <property type="project" value="UniProtKB"/>
</dbReference>
<dbReference type="GO" id="GO:0018022">
    <property type="term" value="P:peptidyl-lysine methylation"/>
    <property type="evidence" value="ECO:0000314"/>
    <property type="project" value="UniProtKB"/>
</dbReference>
<dbReference type="FunFam" id="3.40.50.150:FF:000160">
    <property type="entry name" value="EEF1A lysine methyltransferase 3"/>
    <property type="match status" value="1"/>
</dbReference>
<dbReference type="Gene3D" id="3.40.50.150">
    <property type="entry name" value="Vaccinia Virus protein VP39"/>
    <property type="match status" value="1"/>
</dbReference>
<dbReference type="InterPro" id="IPR019410">
    <property type="entry name" value="Methyltransf_16"/>
</dbReference>
<dbReference type="InterPro" id="IPR029063">
    <property type="entry name" value="SAM-dependent_MTases_sf"/>
</dbReference>
<dbReference type="PANTHER" id="PTHR14614:SF5">
    <property type="entry name" value="EEF1A LYSINE METHYLTRANSFERASE 3"/>
    <property type="match status" value="1"/>
</dbReference>
<dbReference type="PANTHER" id="PTHR14614">
    <property type="entry name" value="HEPATOCELLULAR CARCINOMA-ASSOCIATED ANTIGEN"/>
    <property type="match status" value="1"/>
</dbReference>
<dbReference type="Pfam" id="PF10294">
    <property type="entry name" value="Methyltransf_16"/>
    <property type="match status" value="1"/>
</dbReference>
<dbReference type="SUPFAM" id="SSF53335">
    <property type="entry name" value="S-adenosyl-L-methionine-dependent methyltransferases"/>
    <property type="match status" value="1"/>
</dbReference>
<organism>
    <name type="scientific">Homo sapiens</name>
    <name type="common">Human</name>
    <dbReference type="NCBI Taxonomy" id="9606"/>
    <lineage>
        <taxon>Eukaryota</taxon>
        <taxon>Metazoa</taxon>
        <taxon>Chordata</taxon>
        <taxon>Craniata</taxon>
        <taxon>Vertebrata</taxon>
        <taxon>Euteleostomi</taxon>
        <taxon>Mammalia</taxon>
        <taxon>Eutheria</taxon>
        <taxon>Euarchontoglires</taxon>
        <taxon>Primates</taxon>
        <taxon>Haplorrhini</taxon>
        <taxon>Catarrhini</taxon>
        <taxon>Hominidae</taxon>
        <taxon>Homo</taxon>
    </lineage>
</organism>
<comment type="function">
    <text evidence="2 3">Protein-lysine methyltransferase that selectively mono-, di- and trimethylates 'Lys-165' of the translation elongation factors EEF1A1 and EEF1A2 in an aminoacyl-tRNA and GTP-dependent manner. EEF1A1 methylation by EEF1AKMT3 is dynamic as well as inducible by stress conditions, such as ER-stress, and plays a regulatory role on mRNA translation.</text>
</comment>
<comment type="catalytic activity">
    <reaction evidence="2 3">
        <text>L-lysyl-[protein] + 3 S-adenosyl-L-methionine = N(6),N(6),N(6)-trimethyl-L-lysyl-[protein] + 3 S-adenosyl-L-homocysteine + 3 H(+)</text>
        <dbReference type="Rhea" id="RHEA:54192"/>
        <dbReference type="Rhea" id="RHEA-COMP:9752"/>
        <dbReference type="Rhea" id="RHEA-COMP:13826"/>
        <dbReference type="ChEBI" id="CHEBI:15378"/>
        <dbReference type="ChEBI" id="CHEBI:29969"/>
        <dbReference type="ChEBI" id="CHEBI:57856"/>
        <dbReference type="ChEBI" id="CHEBI:59789"/>
        <dbReference type="ChEBI" id="CHEBI:61961"/>
    </reaction>
    <physiologicalReaction direction="left-to-right" evidence="11">
        <dbReference type="Rhea" id="RHEA:54193"/>
    </physiologicalReaction>
</comment>
<comment type="catalytic activity">
    <reaction evidence="2 3">
        <text>L-lysyl-[protein] + S-adenosyl-L-methionine = N(6)-methyl-L-lysyl-[protein] + S-adenosyl-L-homocysteine + H(+)</text>
        <dbReference type="Rhea" id="RHEA:51736"/>
        <dbReference type="Rhea" id="RHEA-COMP:9752"/>
        <dbReference type="Rhea" id="RHEA-COMP:13053"/>
        <dbReference type="ChEBI" id="CHEBI:15378"/>
        <dbReference type="ChEBI" id="CHEBI:29969"/>
        <dbReference type="ChEBI" id="CHEBI:57856"/>
        <dbReference type="ChEBI" id="CHEBI:59789"/>
        <dbReference type="ChEBI" id="CHEBI:61929"/>
    </reaction>
    <physiologicalReaction direction="left-to-right" evidence="11">
        <dbReference type="Rhea" id="RHEA:51737"/>
    </physiologicalReaction>
</comment>
<comment type="catalytic activity">
    <reaction evidence="2 3">
        <text>N(6)-methyl-L-lysyl-[protein] + S-adenosyl-L-methionine = N(6),N(6)-dimethyl-L-lysyl-[protein] + S-adenosyl-L-homocysteine + H(+)</text>
        <dbReference type="Rhea" id="RHEA:54196"/>
        <dbReference type="Rhea" id="RHEA-COMP:13053"/>
        <dbReference type="Rhea" id="RHEA-COMP:13827"/>
        <dbReference type="ChEBI" id="CHEBI:15378"/>
        <dbReference type="ChEBI" id="CHEBI:57856"/>
        <dbReference type="ChEBI" id="CHEBI:59789"/>
        <dbReference type="ChEBI" id="CHEBI:61929"/>
        <dbReference type="ChEBI" id="CHEBI:61976"/>
    </reaction>
    <physiologicalReaction direction="left-to-right" evidence="11">
        <dbReference type="Rhea" id="RHEA:54197"/>
    </physiologicalReaction>
</comment>
<comment type="catalytic activity">
    <reaction evidence="2 3">
        <text>N(6),N(6)-dimethyl-L-lysyl-[protein] + S-adenosyl-L-methionine = N(6),N(6),N(6)-trimethyl-L-lysyl-[protein] + S-adenosyl-L-homocysteine + H(+)</text>
        <dbReference type="Rhea" id="RHEA:54200"/>
        <dbReference type="Rhea" id="RHEA-COMP:13826"/>
        <dbReference type="Rhea" id="RHEA-COMP:13827"/>
        <dbReference type="ChEBI" id="CHEBI:15378"/>
        <dbReference type="ChEBI" id="CHEBI:57856"/>
        <dbReference type="ChEBI" id="CHEBI:59789"/>
        <dbReference type="ChEBI" id="CHEBI:61961"/>
        <dbReference type="ChEBI" id="CHEBI:61976"/>
    </reaction>
    <physiologicalReaction direction="left-to-right" evidence="11">
        <dbReference type="Rhea" id="RHEA:54201"/>
    </physiologicalReaction>
</comment>
<comment type="subunit">
    <text evidence="1">Interacts with members of the heat shock protein 70 and 90 families and of the TCP-1 chaperonin family, as well as with HSPD1, STIP1 and tubulin; at least some of these proteins may be methylation substrates.</text>
</comment>
<comment type="interaction">
    <interactant intactId="EBI-12108304">
        <id>Q96AZ1</id>
    </interactant>
    <interactant intactId="EBI-12078276">
        <id>Q60I27</id>
        <label>ALS2CL</label>
    </interactant>
    <organismsDiffer>false</organismsDiffer>
    <experiments>3</experiments>
</comment>
<comment type="interaction">
    <interactant intactId="EBI-12108304">
        <id>Q96AZ1</id>
    </interactant>
    <interactant intactId="EBI-751857">
        <id>O15481</id>
        <label>MAGEB4</label>
    </interactant>
    <organismsDiffer>false</organismsDiffer>
    <experiments>3</experiments>
</comment>
<comment type="interaction">
    <interactant intactId="EBI-12108304">
        <id>Q96AZ1</id>
    </interactant>
    <interactant intactId="EBI-10699187">
        <id>Q8IXL7-2</id>
        <label>MSRB3</label>
    </interactant>
    <organismsDiffer>false</organismsDiffer>
    <experiments>3</experiments>
</comment>
<comment type="interaction">
    <interactant intactId="EBI-12108304">
        <id>Q96AZ1</id>
    </interactant>
    <interactant intactId="EBI-2107455">
        <id>Q08AM6</id>
        <label>VAC14</label>
    </interactant>
    <organismsDiffer>false</organismsDiffer>
    <experiments>3</experiments>
</comment>
<comment type="interaction">
    <interactant intactId="EBI-12108304">
        <id>Q96AZ1</id>
    </interactant>
    <interactant intactId="EBI-11963196">
        <id>Q15915</id>
        <label>ZIC1</label>
    </interactant>
    <organismsDiffer>false</organismsDiffer>
    <experiments>3</experiments>
</comment>
<comment type="subcellular location">
    <subcellularLocation>
        <location evidence="1 2">Cytoplasm</location>
    </subcellularLocation>
    <subcellularLocation>
        <location evidence="2">Cytoplasm</location>
        <location evidence="2">Cytoskeleton</location>
        <location evidence="2">Microtubule organizing center</location>
        <location evidence="2">Centrosome</location>
    </subcellularLocation>
</comment>
<comment type="alternative products">
    <event type="alternative splicing"/>
    <isoform>
        <id>Q96AZ1-1</id>
        <name>1</name>
        <sequence type="displayed"/>
    </isoform>
    <isoform>
        <id>Q96AZ1-2</id>
        <name>2</name>
        <sequence type="described" ref="VSP_026270 VSP_026271"/>
    </isoform>
    <isoform>
        <id>Q96AZ1-3</id>
        <name>3</name>
        <sequence type="described" ref="VSP_026268 VSP_026269"/>
    </isoform>
</comment>
<comment type="similarity">
    <text evidence="10">Belongs to the methyltransferase superfamily. METTL21 family.</text>
</comment>
<accession>Q96AZ1</accession>
<accession>Q9H749</accession>
<accession>Q9Y3W2</accession>
<evidence type="ECO:0000269" key="1">
    <source>
    </source>
</evidence>
<evidence type="ECO:0000269" key="2">
    <source>
    </source>
</evidence>
<evidence type="ECO:0000269" key="3">
    <source>
    </source>
</evidence>
<evidence type="ECO:0000269" key="4">
    <source ref="8"/>
</evidence>
<evidence type="ECO:0000303" key="5">
    <source>
    </source>
</evidence>
<evidence type="ECO:0000303" key="6">
    <source>
    </source>
</evidence>
<evidence type="ECO:0000303" key="7">
    <source>
    </source>
</evidence>
<evidence type="ECO:0000303" key="8">
    <source>
    </source>
</evidence>
<evidence type="ECO:0000303" key="9">
    <source ref="1"/>
</evidence>
<evidence type="ECO:0000305" key="10"/>
<evidence type="ECO:0000305" key="11">
    <source>
    </source>
</evidence>
<evidence type="ECO:0000312" key="12">
    <source>
        <dbReference type="HGNC" id="HGNC:24936"/>
    </source>
</evidence>
<evidence type="ECO:0007744" key="13">
    <source>
        <dbReference type="PDB" id="4QPN"/>
    </source>
</evidence>
<evidence type="ECO:0007829" key="14">
    <source>
        <dbReference type="PDB" id="4QPN"/>
    </source>
</evidence>
<feature type="chain" id="PRO_0000291850" description="EEF1A lysine methyltransferase 3">
    <location>
        <begin position="1"/>
        <end position="226"/>
    </location>
</feature>
<feature type="binding site" evidence="4 13">
    <location>
        <position position="57"/>
    </location>
    <ligand>
        <name>S-adenosyl-L-methionine</name>
        <dbReference type="ChEBI" id="CHEBI:59789"/>
    </ligand>
</feature>
<feature type="binding site" evidence="4 13">
    <location>
        <begin position="83"/>
        <end position="85"/>
    </location>
    <ligand>
        <name>S-adenosyl-L-methionine</name>
        <dbReference type="ChEBI" id="CHEBI:59789"/>
    </ligand>
</feature>
<feature type="binding site" evidence="4 13">
    <location>
        <position position="104"/>
    </location>
    <ligand>
        <name>S-adenosyl-L-methionine</name>
        <dbReference type="ChEBI" id="CHEBI:59789"/>
    </ligand>
</feature>
<feature type="binding site" evidence="4 13">
    <location>
        <position position="133"/>
    </location>
    <ligand>
        <name>S-adenosyl-L-methionine</name>
        <dbReference type="ChEBI" id="CHEBI:59789"/>
    </ligand>
</feature>
<feature type="binding site" evidence="4 13">
    <location>
        <position position="150"/>
    </location>
    <ligand>
        <name>S-adenosyl-L-methionine</name>
        <dbReference type="ChEBI" id="CHEBI:59789"/>
    </ligand>
</feature>
<feature type="splice variant" id="VSP_026268" description="In isoform 3." evidence="5">
    <location>
        <begin position="1"/>
        <end position="71"/>
    </location>
</feature>
<feature type="splice variant" id="VSP_026269" description="In isoform 3." evidence="5">
    <original>VDFRGKKVIELGAGTGIVGILAALQG</original>
    <variation>MRGACGHALSMSTMTPWESIKGSSVR</variation>
    <location>
        <begin position="72"/>
        <end position="97"/>
    </location>
</feature>
<feature type="splice variant" id="VSP_026270" description="In isoform 2." evidence="6">
    <original>GDVTITDLPLALEQIQGNVQANVPAGGQAQVRALSWGIDHHVFPANYDLVLG</original>
    <variation>AYGLVRETEDDVIEQELWRGMRGACGHALSMSTMTPWESIKGSSVRGGCYHH</variation>
    <location>
        <begin position="98"/>
        <end position="149"/>
    </location>
</feature>
<feature type="splice variant" id="VSP_026271" description="In isoform 2." evidence="6">
    <location>
        <begin position="150"/>
        <end position="226"/>
    </location>
</feature>
<feature type="sequence variant" id="VAR_032869" description="In dbSNP:rs34913183.">
    <original>S</original>
    <variation>L</variation>
    <location>
        <position position="28"/>
    </location>
</feature>
<feature type="strand" evidence="14">
    <location>
        <begin position="27"/>
        <end position="35"/>
    </location>
</feature>
<feature type="strand" evidence="14">
    <location>
        <begin position="38"/>
        <end position="49"/>
    </location>
</feature>
<feature type="helix" evidence="14">
    <location>
        <begin position="51"/>
        <end position="54"/>
    </location>
</feature>
<feature type="helix" evidence="14">
    <location>
        <begin position="58"/>
        <end position="69"/>
    </location>
</feature>
<feature type="strand" evidence="14">
    <location>
        <begin position="78"/>
        <end position="83"/>
    </location>
</feature>
<feature type="helix" evidence="14">
    <location>
        <begin position="88"/>
        <end position="95"/>
    </location>
</feature>
<feature type="strand" evidence="14">
    <location>
        <begin position="99"/>
        <end position="104"/>
    </location>
</feature>
<feature type="helix" evidence="14">
    <location>
        <begin position="106"/>
        <end position="108"/>
    </location>
</feature>
<feature type="helix" evidence="14">
    <location>
        <begin position="109"/>
        <end position="119"/>
    </location>
</feature>
<feature type="strand" evidence="14">
    <location>
        <begin position="125"/>
        <end position="130"/>
    </location>
</feature>
<feature type="turn" evidence="14">
    <location>
        <begin position="133"/>
        <end position="135"/>
    </location>
</feature>
<feature type="helix" evidence="14">
    <location>
        <begin position="137"/>
        <end position="139"/>
    </location>
</feature>
<feature type="strand" evidence="14">
    <location>
        <begin position="144"/>
        <end position="151"/>
    </location>
</feature>
<feature type="helix" evidence="14">
    <location>
        <begin position="156"/>
        <end position="158"/>
    </location>
</feature>
<feature type="helix" evidence="14">
    <location>
        <begin position="159"/>
        <end position="169"/>
    </location>
</feature>
<feature type="strand" evidence="14">
    <location>
        <begin position="170"/>
        <end position="181"/>
    </location>
</feature>
<feature type="helix" evidence="14">
    <location>
        <begin position="184"/>
        <end position="186"/>
    </location>
</feature>
<feature type="helix" evidence="14">
    <location>
        <begin position="188"/>
        <end position="193"/>
    </location>
</feature>
<feature type="helix" evidence="14">
    <location>
        <begin position="196"/>
        <end position="198"/>
    </location>
</feature>
<feature type="strand" evidence="14">
    <location>
        <begin position="200"/>
        <end position="208"/>
    </location>
</feature>
<feature type="turn" evidence="14">
    <location>
        <begin position="209"/>
        <end position="212"/>
    </location>
</feature>
<feature type="strand" evidence="14">
    <location>
        <begin position="213"/>
        <end position="220"/>
    </location>
</feature>